<name>NUSB_LEPBA</name>
<sequence>MSSRHRGRSLALMCLYQIDLVGTDPDRAMKFDWYDKKITREEKDYAVFLVKGVVENRKAIDTLIKKYSENWELSRISVVNRCILRLSILSLQKEPFLAAPVVINEAVELTKEFETEESAQFINGLLDAFYKKEILPKEPH</sequence>
<accession>B0SB76</accession>
<proteinExistence type="inferred from homology"/>
<keyword id="KW-0694">RNA-binding</keyword>
<keyword id="KW-0804">Transcription</keyword>
<keyword id="KW-0889">Transcription antitermination</keyword>
<keyword id="KW-0805">Transcription regulation</keyword>
<protein>
    <recommendedName>
        <fullName evidence="1">Transcription antitermination protein NusB</fullName>
    </recommendedName>
    <alternativeName>
        <fullName evidence="1">Antitermination factor NusB</fullName>
    </alternativeName>
</protein>
<evidence type="ECO:0000255" key="1">
    <source>
        <dbReference type="HAMAP-Rule" id="MF_00073"/>
    </source>
</evidence>
<feature type="chain" id="PRO_1000092564" description="Transcription antitermination protein NusB">
    <location>
        <begin position="1"/>
        <end position="140"/>
    </location>
</feature>
<comment type="function">
    <text evidence="1">Involved in transcription antitermination. Required for transcription of ribosomal RNA (rRNA) genes. Binds specifically to the boxA antiterminator sequence of the ribosomal RNA (rrn) operons.</text>
</comment>
<comment type="similarity">
    <text evidence="1">Belongs to the NusB family.</text>
</comment>
<gene>
    <name evidence="1" type="primary">nusB</name>
    <name type="ordered locus">LBF_2085</name>
</gene>
<reference key="1">
    <citation type="journal article" date="2008" name="PLoS ONE">
        <title>Genome sequence of the saprophyte Leptospira biflexa provides insights into the evolution of Leptospira and the pathogenesis of leptospirosis.</title>
        <authorList>
            <person name="Picardeau M."/>
            <person name="Bulach D.M."/>
            <person name="Bouchier C."/>
            <person name="Zuerner R.L."/>
            <person name="Zidane N."/>
            <person name="Wilson P.J."/>
            <person name="Creno S."/>
            <person name="Kuczek E.S."/>
            <person name="Bommezzadri S."/>
            <person name="Davis J.C."/>
            <person name="McGrath A."/>
            <person name="Johnson M.J."/>
            <person name="Boursaux-Eude C."/>
            <person name="Seemann T."/>
            <person name="Rouy Z."/>
            <person name="Coppel R.L."/>
            <person name="Rood J.I."/>
            <person name="Lajus A."/>
            <person name="Davies J.K."/>
            <person name="Medigue C."/>
            <person name="Adler B."/>
        </authorList>
    </citation>
    <scope>NUCLEOTIDE SEQUENCE [LARGE SCALE GENOMIC DNA]</scope>
    <source>
        <strain>Patoc 1 / Ames</strain>
    </source>
</reference>
<dbReference type="EMBL" id="CP000777">
    <property type="protein sequence ID" value="ABZ94582.1"/>
    <property type="molecule type" value="Genomic_DNA"/>
</dbReference>
<dbReference type="RefSeq" id="WP_012389111.1">
    <property type="nucleotide sequence ID" value="NC_010842.1"/>
</dbReference>
<dbReference type="SMR" id="B0SB76"/>
<dbReference type="KEGG" id="lbf:LBF_2085"/>
<dbReference type="HOGENOM" id="CLU_087843_3_3_12"/>
<dbReference type="GO" id="GO:0005829">
    <property type="term" value="C:cytosol"/>
    <property type="evidence" value="ECO:0007669"/>
    <property type="project" value="TreeGrafter"/>
</dbReference>
<dbReference type="GO" id="GO:0003723">
    <property type="term" value="F:RNA binding"/>
    <property type="evidence" value="ECO:0007669"/>
    <property type="project" value="UniProtKB-UniRule"/>
</dbReference>
<dbReference type="GO" id="GO:0006353">
    <property type="term" value="P:DNA-templated transcription termination"/>
    <property type="evidence" value="ECO:0007669"/>
    <property type="project" value="UniProtKB-UniRule"/>
</dbReference>
<dbReference type="GO" id="GO:0031564">
    <property type="term" value="P:transcription antitermination"/>
    <property type="evidence" value="ECO:0007669"/>
    <property type="project" value="UniProtKB-KW"/>
</dbReference>
<dbReference type="Gene3D" id="1.10.940.10">
    <property type="entry name" value="NusB-like"/>
    <property type="match status" value="1"/>
</dbReference>
<dbReference type="HAMAP" id="MF_00073">
    <property type="entry name" value="NusB"/>
    <property type="match status" value="1"/>
</dbReference>
<dbReference type="InterPro" id="IPR035926">
    <property type="entry name" value="NusB-like_sf"/>
</dbReference>
<dbReference type="InterPro" id="IPR011605">
    <property type="entry name" value="NusB_fam"/>
</dbReference>
<dbReference type="InterPro" id="IPR006027">
    <property type="entry name" value="NusB_RsmB_TIM44"/>
</dbReference>
<dbReference type="NCBIfam" id="TIGR01951">
    <property type="entry name" value="nusB"/>
    <property type="match status" value="1"/>
</dbReference>
<dbReference type="PANTHER" id="PTHR11078:SF3">
    <property type="entry name" value="ANTITERMINATION NUSB DOMAIN-CONTAINING PROTEIN"/>
    <property type="match status" value="1"/>
</dbReference>
<dbReference type="PANTHER" id="PTHR11078">
    <property type="entry name" value="N UTILIZATION SUBSTANCE PROTEIN B-RELATED"/>
    <property type="match status" value="1"/>
</dbReference>
<dbReference type="Pfam" id="PF01029">
    <property type="entry name" value="NusB"/>
    <property type="match status" value="1"/>
</dbReference>
<dbReference type="SUPFAM" id="SSF48013">
    <property type="entry name" value="NusB-like"/>
    <property type="match status" value="1"/>
</dbReference>
<organism>
    <name type="scientific">Leptospira biflexa serovar Patoc (strain Patoc 1 / Ames)</name>
    <dbReference type="NCBI Taxonomy" id="355278"/>
    <lineage>
        <taxon>Bacteria</taxon>
        <taxon>Pseudomonadati</taxon>
        <taxon>Spirochaetota</taxon>
        <taxon>Spirochaetia</taxon>
        <taxon>Leptospirales</taxon>
        <taxon>Leptospiraceae</taxon>
        <taxon>Leptospira</taxon>
    </lineage>
</organism>